<accession>Q40585</accession>
<accession>Q40560</accession>
<name>VATL_TOBAC</name>
<reference key="1">
    <citation type="submission" date="1996-02" db="EMBL/GenBank/DDBJ databases">
        <authorList>
            <person name="Kirsch M."/>
        </authorList>
    </citation>
    <scope>NUCLEOTIDE SEQUENCE [MRNA]</scope>
</reference>
<keyword id="KW-0375">Hydrogen ion transport</keyword>
<keyword id="KW-0406">Ion transport</keyword>
<keyword id="KW-0472">Membrane</keyword>
<keyword id="KW-1185">Reference proteome</keyword>
<keyword id="KW-0812">Transmembrane</keyword>
<keyword id="KW-1133">Transmembrane helix</keyword>
<keyword id="KW-0813">Transport</keyword>
<keyword id="KW-0926">Vacuole</keyword>
<proteinExistence type="evidence at transcript level"/>
<dbReference type="EMBL" id="X95751">
    <property type="protein sequence ID" value="CAA65062.1"/>
    <property type="molecule type" value="mRNA"/>
</dbReference>
<dbReference type="EMBL" id="X95752">
    <property type="protein sequence ID" value="CAA65063.1"/>
    <property type="molecule type" value="mRNA"/>
</dbReference>
<dbReference type="RefSeq" id="NP_001412872.1">
    <property type="nucleotide sequence ID" value="NM_001425943.1"/>
</dbReference>
<dbReference type="RefSeq" id="XP_016499435.1">
    <property type="nucleotide sequence ID" value="XM_016643949.1"/>
</dbReference>
<dbReference type="SMR" id="Q40585"/>
<dbReference type="STRING" id="4097.Q40585"/>
<dbReference type="PaxDb" id="4097-Q40585"/>
<dbReference type="GeneID" id="107818038"/>
<dbReference type="KEGG" id="nta:107818038"/>
<dbReference type="OMA" id="KPPYAFF"/>
<dbReference type="OrthoDB" id="1227079at2759"/>
<dbReference type="Proteomes" id="UP000084051">
    <property type="component" value="Unplaced"/>
</dbReference>
<dbReference type="GO" id="GO:0016020">
    <property type="term" value="C:membrane"/>
    <property type="evidence" value="ECO:0000318"/>
    <property type="project" value="GO_Central"/>
</dbReference>
<dbReference type="GO" id="GO:0033179">
    <property type="term" value="C:proton-transporting V-type ATPase, V0 domain"/>
    <property type="evidence" value="ECO:0007669"/>
    <property type="project" value="InterPro"/>
</dbReference>
<dbReference type="GO" id="GO:0005774">
    <property type="term" value="C:vacuolar membrane"/>
    <property type="evidence" value="ECO:0007669"/>
    <property type="project" value="UniProtKB-SubCell"/>
</dbReference>
<dbReference type="GO" id="GO:0046961">
    <property type="term" value="F:proton-transporting ATPase activity, rotational mechanism"/>
    <property type="evidence" value="ECO:0007669"/>
    <property type="project" value="InterPro"/>
</dbReference>
<dbReference type="CDD" id="cd18175">
    <property type="entry name" value="ATP-synt_Vo_c_ATP6C_rpt1"/>
    <property type="match status" value="1"/>
</dbReference>
<dbReference type="CDD" id="cd18176">
    <property type="entry name" value="ATP-synt_Vo_c_ATP6C_rpt2"/>
    <property type="match status" value="1"/>
</dbReference>
<dbReference type="FunFam" id="1.20.120.610:FF:000003">
    <property type="entry name" value="V-type proton ATPase proteolipid subunit"/>
    <property type="match status" value="1"/>
</dbReference>
<dbReference type="Gene3D" id="1.20.120.610">
    <property type="entry name" value="lithium bound rotor ring of v- atpase"/>
    <property type="match status" value="1"/>
</dbReference>
<dbReference type="InterPro" id="IPR002379">
    <property type="entry name" value="ATPase_proteolipid_c-like_dom"/>
</dbReference>
<dbReference type="InterPro" id="IPR000245">
    <property type="entry name" value="ATPase_proteolipid_csu"/>
</dbReference>
<dbReference type="InterPro" id="IPR011555">
    <property type="entry name" value="ATPase_proteolipid_su_C_euk"/>
</dbReference>
<dbReference type="InterPro" id="IPR035921">
    <property type="entry name" value="F/V-ATP_Csub_sf"/>
</dbReference>
<dbReference type="NCBIfam" id="TIGR01100">
    <property type="entry name" value="V_ATP_synt_C"/>
    <property type="match status" value="1"/>
</dbReference>
<dbReference type="PANTHER" id="PTHR10263">
    <property type="entry name" value="V-TYPE PROTON ATPASE PROTEOLIPID SUBUNIT"/>
    <property type="match status" value="1"/>
</dbReference>
<dbReference type="Pfam" id="PF00137">
    <property type="entry name" value="ATP-synt_C"/>
    <property type="match status" value="2"/>
</dbReference>
<dbReference type="PRINTS" id="PR00122">
    <property type="entry name" value="VACATPASE"/>
</dbReference>
<dbReference type="SUPFAM" id="SSF81333">
    <property type="entry name" value="F1F0 ATP synthase subunit C"/>
    <property type="match status" value="2"/>
</dbReference>
<evidence type="ECO:0000250" key="1"/>
<evidence type="ECO:0000255" key="2"/>
<evidence type="ECO:0000305" key="3"/>
<feature type="chain" id="PRO_0000071776" description="V-type proton ATPase 16 kDa proteolipid subunit">
    <location>
        <begin position="1"/>
        <end position="165"/>
    </location>
</feature>
<feature type="topological domain" description="Lumenal" evidence="2">
    <location>
        <begin position="1"/>
        <end position="10"/>
    </location>
</feature>
<feature type="transmembrane region" description="Helical" evidence="2">
    <location>
        <begin position="11"/>
        <end position="33"/>
    </location>
</feature>
<feature type="topological domain" description="Cytoplasmic" evidence="2">
    <location>
        <begin position="34"/>
        <end position="55"/>
    </location>
</feature>
<feature type="transmembrane region" description="Helical" evidence="2">
    <location>
        <begin position="56"/>
        <end position="76"/>
    </location>
</feature>
<feature type="topological domain" description="Lumenal" evidence="2">
    <location>
        <begin position="77"/>
        <end position="95"/>
    </location>
</feature>
<feature type="transmembrane region" description="Helical" evidence="2">
    <location>
        <begin position="96"/>
        <end position="117"/>
    </location>
</feature>
<feature type="topological domain" description="Cytoplasmic" evidence="2">
    <location>
        <begin position="118"/>
        <end position="129"/>
    </location>
</feature>
<feature type="transmembrane region" description="Helical" evidence="2">
    <location>
        <begin position="130"/>
        <end position="155"/>
    </location>
</feature>
<feature type="topological domain" description="Lumenal" evidence="2">
    <location>
        <begin position="156"/>
        <end position="165"/>
    </location>
</feature>
<feature type="site" description="Essential for proton translocation" evidence="1">
    <location>
        <position position="142"/>
    </location>
</feature>
<feature type="sequence variant" description="In isoform 2.">
    <original>P</original>
    <variation>A</variation>
    <location>
        <position position="2"/>
    </location>
</feature>
<feature type="sequence variant" description="In isoform 2.">
    <original>S</original>
    <variation>C</variation>
    <location>
        <position position="43"/>
    </location>
</feature>
<feature type="sequence variant" description="In isoform 2.">
    <original>V</original>
    <variation>L</variation>
    <location>
        <position position="74"/>
    </location>
</feature>
<protein>
    <recommendedName>
        <fullName>V-type proton ATPase 16 kDa proteolipid subunit</fullName>
        <shortName>V-ATPase 16 kDa proteolipid subunit</shortName>
    </recommendedName>
    <alternativeName>
        <fullName>Vacuolar proton pump 16 kDa proteolipid subunit</fullName>
    </alternativeName>
</protein>
<comment type="function">
    <text>Proton-conducting pore forming subunit of the membrane integral V0 complex of vacuolar ATPase. V-ATPase is responsible for acidifying a variety of intracellular compartments in eukaryotic cells.</text>
</comment>
<comment type="subunit">
    <text>V-ATPase is a heteromultimeric enzyme composed of a peripheral catalytic V1 complex (main components: subunits A, B, C, D, E, and F) attached to an integral membrane V0 proton pore complex (main component: the proteolipid protein; which is present as a hexamer that forms the proton-conducting pore).</text>
</comment>
<comment type="subcellular location">
    <subcellularLocation>
        <location>Vacuole membrane</location>
        <topology>Multi-pass membrane protein</topology>
    </subcellularLocation>
    <text>Tonoplast.</text>
</comment>
<comment type="similarity">
    <text evidence="3">Belongs to the V-ATPase proteolipid subunit family.</text>
</comment>
<sequence length="165" mass="16699">MPSTFSGDETAPFFGFLGAAAALVFSCMGAAYGTAKSGVGVASMGVMRPELVMKSIVPVVMAGVLGIYGLIIAVIISTGINPKTKSYYLFDGYAHLSSGLACGLAGLSAGMAIGIVGDAGVRANAQQPKLFVGMILILIFAEALALYGLIVGIILSSRAGQSRAE</sequence>
<organism>
    <name type="scientific">Nicotiana tabacum</name>
    <name type="common">Common tobacco</name>
    <dbReference type="NCBI Taxonomy" id="4097"/>
    <lineage>
        <taxon>Eukaryota</taxon>
        <taxon>Viridiplantae</taxon>
        <taxon>Streptophyta</taxon>
        <taxon>Embryophyta</taxon>
        <taxon>Tracheophyta</taxon>
        <taxon>Spermatophyta</taxon>
        <taxon>Magnoliopsida</taxon>
        <taxon>eudicotyledons</taxon>
        <taxon>Gunneridae</taxon>
        <taxon>Pentapetalae</taxon>
        <taxon>asterids</taxon>
        <taxon>lamiids</taxon>
        <taxon>Solanales</taxon>
        <taxon>Solanaceae</taxon>
        <taxon>Nicotianoideae</taxon>
        <taxon>Nicotianeae</taxon>
        <taxon>Nicotiana</taxon>
    </lineage>
</organism>